<proteinExistence type="inferred from homology"/>
<reference key="1">
    <citation type="journal article" date="2008" name="Environ. Microbiol.">
        <title>The genome of Erwinia tasmaniensis strain Et1/99, a non-pathogenic bacterium in the genus Erwinia.</title>
        <authorList>
            <person name="Kube M."/>
            <person name="Migdoll A.M."/>
            <person name="Mueller I."/>
            <person name="Kuhl H."/>
            <person name="Beck A."/>
            <person name="Reinhardt R."/>
            <person name="Geider K."/>
        </authorList>
    </citation>
    <scope>NUCLEOTIDE SEQUENCE [LARGE SCALE GENOMIC DNA]</scope>
    <source>
        <strain>DSM 17950 / CFBP 7177 / CIP 109463 / NCPPB 4357 / Et1/99</strain>
    </source>
</reference>
<protein>
    <recommendedName>
        <fullName evidence="1">Phosphate acyltransferase</fullName>
        <ecNumber evidence="1">2.3.1.274</ecNumber>
    </recommendedName>
    <alternativeName>
        <fullName evidence="1">Acyl-ACP phosphotransacylase</fullName>
    </alternativeName>
    <alternativeName>
        <fullName evidence="1">Acyl-[acyl-carrier-protein]--phosphate acyltransferase</fullName>
    </alternativeName>
    <alternativeName>
        <fullName evidence="1">Phosphate-acyl-ACP acyltransferase</fullName>
    </alternativeName>
</protein>
<name>PLSX_ERWT9</name>
<evidence type="ECO:0000255" key="1">
    <source>
        <dbReference type="HAMAP-Rule" id="MF_00019"/>
    </source>
</evidence>
<gene>
    <name evidence="1" type="primary">plsX</name>
    <name type="ordered locus">ETA_20250</name>
</gene>
<feature type="chain" id="PRO_1000089905" description="Phosphate acyltransferase">
    <location>
        <begin position="1"/>
        <end position="344"/>
    </location>
</feature>
<comment type="function">
    <text evidence="1">Catalyzes the reversible formation of acyl-phosphate (acyl-PO(4)) from acyl-[acyl-carrier-protein] (acyl-ACP). This enzyme utilizes acyl-ACP as fatty acyl donor, but not acyl-CoA.</text>
</comment>
<comment type="catalytic activity">
    <reaction evidence="1">
        <text>a fatty acyl-[ACP] + phosphate = an acyl phosphate + holo-[ACP]</text>
        <dbReference type="Rhea" id="RHEA:42292"/>
        <dbReference type="Rhea" id="RHEA-COMP:9685"/>
        <dbReference type="Rhea" id="RHEA-COMP:14125"/>
        <dbReference type="ChEBI" id="CHEBI:43474"/>
        <dbReference type="ChEBI" id="CHEBI:59918"/>
        <dbReference type="ChEBI" id="CHEBI:64479"/>
        <dbReference type="ChEBI" id="CHEBI:138651"/>
        <dbReference type="EC" id="2.3.1.274"/>
    </reaction>
</comment>
<comment type="pathway">
    <text evidence="1">Lipid metabolism; phospholipid metabolism.</text>
</comment>
<comment type="subunit">
    <text evidence="1">Homodimer. Probably interacts with PlsY.</text>
</comment>
<comment type="subcellular location">
    <subcellularLocation>
        <location evidence="1">Cytoplasm</location>
    </subcellularLocation>
    <text evidence="1">Associated with the membrane possibly through PlsY.</text>
</comment>
<comment type="similarity">
    <text evidence="1">Belongs to the PlsX family.</text>
</comment>
<dbReference type="EC" id="2.3.1.274" evidence="1"/>
<dbReference type="EMBL" id="CU468135">
    <property type="protein sequence ID" value="CAO97071.1"/>
    <property type="molecule type" value="Genomic_DNA"/>
</dbReference>
<dbReference type="RefSeq" id="WP_012441748.1">
    <property type="nucleotide sequence ID" value="NC_010694.1"/>
</dbReference>
<dbReference type="SMR" id="B2VDK8"/>
<dbReference type="STRING" id="465817.ETA_20250"/>
<dbReference type="KEGG" id="eta:ETA_20250"/>
<dbReference type="eggNOG" id="COG0416">
    <property type="taxonomic scope" value="Bacteria"/>
</dbReference>
<dbReference type="HOGENOM" id="CLU_039379_1_0_6"/>
<dbReference type="OrthoDB" id="9806408at2"/>
<dbReference type="UniPathway" id="UPA00085"/>
<dbReference type="Proteomes" id="UP000001726">
    <property type="component" value="Chromosome"/>
</dbReference>
<dbReference type="GO" id="GO:0005737">
    <property type="term" value="C:cytoplasm"/>
    <property type="evidence" value="ECO:0007669"/>
    <property type="project" value="UniProtKB-SubCell"/>
</dbReference>
<dbReference type="GO" id="GO:0043811">
    <property type="term" value="F:phosphate:acyl-[acyl carrier protein] acyltransferase activity"/>
    <property type="evidence" value="ECO:0007669"/>
    <property type="project" value="UniProtKB-UniRule"/>
</dbReference>
<dbReference type="GO" id="GO:0006633">
    <property type="term" value="P:fatty acid biosynthetic process"/>
    <property type="evidence" value="ECO:0007669"/>
    <property type="project" value="UniProtKB-UniRule"/>
</dbReference>
<dbReference type="GO" id="GO:0008654">
    <property type="term" value="P:phospholipid biosynthetic process"/>
    <property type="evidence" value="ECO:0007669"/>
    <property type="project" value="UniProtKB-KW"/>
</dbReference>
<dbReference type="FunFam" id="3.40.718.10:FF:000008">
    <property type="entry name" value="Phosphate acyltransferase"/>
    <property type="match status" value="1"/>
</dbReference>
<dbReference type="Gene3D" id="3.40.718.10">
    <property type="entry name" value="Isopropylmalate Dehydrogenase"/>
    <property type="match status" value="1"/>
</dbReference>
<dbReference type="HAMAP" id="MF_00019">
    <property type="entry name" value="PlsX"/>
    <property type="match status" value="1"/>
</dbReference>
<dbReference type="InterPro" id="IPR003664">
    <property type="entry name" value="FA_synthesis"/>
</dbReference>
<dbReference type="InterPro" id="IPR012281">
    <property type="entry name" value="Phospholipid_synth_PlsX-like"/>
</dbReference>
<dbReference type="NCBIfam" id="TIGR00182">
    <property type="entry name" value="plsX"/>
    <property type="match status" value="1"/>
</dbReference>
<dbReference type="PANTHER" id="PTHR30100">
    <property type="entry name" value="FATTY ACID/PHOSPHOLIPID SYNTHESIS PROTEIN PLSX"/>
    <property type="match status" value="1"/>
</dbReference>
<dbReference type="PANTHER" id="PTHR30100:SF1">
    <property type="entry name" value="PHOSPHATE ACYLTRANSFERASE"/>
    <property type="match status" value="1"/>
</dbReference>
<dbReference type="Pfam" id="PF02504">
    <property type="entry name" value="FA_synthesis"/>
    <property type="match status" value="1"/>
</dbReference>
<dbReference type="PIRSF" id="PIRSF002465">
    <property type="entry name" value="Phsphlp_syn_PlsX"/>
    <property type="match status" value="1"/>
</dbReference>
<dbReference type="SUPFAM" id="SSF53659">
    <property type="entry name" value="Isocitrate/Isopropylmalate dehydrogenase-like"/>
    <property type="match status" value="1"/>
</dbReference>
<organism>
    <name type="scientific">Erwinia tasmaniensis (strain DSM 17950 / CFBP 7177 / CIP 109463 / NCPPB 4357 / Et1/99)</name>
    <dbReference type="NCBI Taxonomy" id="465817"/>
    <lineage>
        <taxon>Bacteria</taxon>
        <taxon>Pseudomonadati</taxon>
        <taxon>Pseudomonadota</taxon>
        <taxon>Gammaproteobacteria</taxon>
        <taxon>Enterobacterales</taxon>
        <taxon>Erwiniaceae</taxon>
        <taxon>Erwinia</taxon>
    </lineage>
</organism>
<sequence length="344" mass="36579">MTRLTLAIDAMGGDFGPCVTVPASLQALESNPHLHLLLVGDPDIITSSLATADSALRARLQIIAAESVIASDARPSQAIRASRGTSMRIALEQVKEGHAQACISAGNTGALMGLAKLLLKPLDGIDRPALMTVLPHQQHGKTVVLDLGANVDSDSAMLVQFAVMGAVVAEEVLAISRPRVALINIGQEDSKGLTSIRDAAAILRAAAEINFIGYLEGNDLLTGKTDVLVCDGFVGNVTLKTMEGVVRMFLSLLKSQGEGKKKAWWLRLLGRILQKRLAKKFGHLNPDQYNGACLLGLRGTVIKSHGAANQRAFTVAIQQAEQAVQRQIPQRIAARLEAVLPKSD</sequence>
<keyword id="KW-0963">Cytoplasm</keyword>
<keyword id="KW-0444">Lipid biosynthesis</keyword>
<keyword id="KW-0443">Lipid metabolism</keyword>
<keyword id="KW-0594">Phospholipid biosynthesis</keyword>
<keyword id="KW-1208">Phospholipid metabolism</keyword>
<keyword id="KW-1185">Reference proteome</keyword>
<keyword id="KW-0808">Transferase</keyword>
<accession>B2VDK8</accession>